<reference key="1">
    <citation type="journal article" date="2002" name="J. Bacteriol.">
        <title>Whole-genome comparison of Mycobacterium tuberculosis clinical and laboratory strains.</title>
        <authorList>
            <person name="Fleischmann R.D."/>
            <person name="Alland D."/>
            <person name="Eisen J.A."/>
            <person name="Carpenter L."/>
            <person name="White O."/>
            <person name="Peterson J.D."/>
            <person name="DeBoy R.T."/>
            <person name="Dodson R.J."/>
            <person name="Gwinn M.L."/>
            <person name="Haft D.H."/>
            <person name="Hickey E.K."/>
            <person name="Kolonay J.F."/>
            <person name="Nelson W.C."/>
            <person name="Umayam L.A."/>
            <person name="Ermolaeva M.D."/>
            <person name="Salzberg S.L."/>
            <person name="Delcher A."/>
            <person name="Utterback T.R."/>
            <person name="Weidman J.F."/>
            <person name="Khouri H.M."/>
            <person name="Gill J."/>
            <person name="Mikula A."/>
            <person name="Bishai W."/>
            <person name="Jacobs W.R. Jr."/>
            <person name="Venter J.C."/>
            <person name="Fraser C.M."/>
        </authorList>
    </citation>
    <scope>NUCLEOTIDE SEQUENCE [LARGE SCALE GENOMIC DNA]</scope>
    <source>
        <strain>CDC 1551 / Oshkosh</strain>
    </source>
</reference>
<evidence type="ECO:0000250" key="1">
    <source>
        <dbReference type="UniProtKB" id="P9WPJ1"/>
    </source>
</evidence>
<evidence type="ECO:0000256" key="2">
    <source>
        <dbReference type="SAM" id="MobiDB-lite"/>
    </source>
</evidence>
<evidence type="ECO:0000305" key="3"/>
<organism>
    <name type="scientific">Mycobacterium tuberculosis (strain CDC 1551 / Oshkosh)</name>
    <dbReference type="NCBI Taxonomy" id="83331"/>
    <lineage>
        <taxon>Bacteria</taxon>
        <taxon>Bacillati</taxon>
        <taxon>Actinomycetota</taxon>
        <taxon>Actinomycetes</taxon>
        <taxon>Mycobacteriales</taxon>
        <taxon>Mycobacteriaceae</taxon>
        <taxon>Mycobacterium</taxon>
        <taxon>Mycobacterium tuberculosis complex</taxon>
    </lineage>
</organism>
<comment type="function">
    <text evidence="1">CRISPR (clustered regularly interspaced short palindromic repeat) is an adaptive immune system that provides protection against mobile genetic elements (viruses, transposable elements and conjugative plasmids). CRISPR clusters contain sequences complementary to antecedent mobile elements and target invading nucleic acids. CRISPR clusters are transcribed and processed into CRISPR RNA (crRNA). Processes pre-crRNA into individual crRNA units.</text>
</comment>
<comment type="cofactor">
    <cofactor evidence="1">
        <name>a divalent metal cation</name>
        <dbReference type="ChEBI" id="CHEBI:60240"/>
    </cofactor>
</comment>
<comment type="miscellaneous">
    <text evidence="3">Encoded in a type III-A CRISPR locus.</text>
</comment>
<comment type="similarity">
    <text evidence="3">Belongs to the CRISPR-associated protein Cas6/Cse3/CasE family.</text>
</comment>
<accession>P9WPJ0</accession>
<accession>F2GLB0</accession>
<accession>L0TCC6</accession>
<accession>P71628</accession>
<accession>Q7D6I1</accession>
<sequence length="314" mass="34432">MAARRGGIRRTDLLRRSGQPRGRHRASAAESGLTWISPTLILVGFSHRGDRRMTEHLSRLTLTLEVDAPLERARVATLGPHLHGVLMESIPADYVQTLHTVPVNPYSQYALARSTTSLEWKISTLTNEARQQIVGPINDAAFAGFRLRASGIATQVTSRSLEQNPLSQFARIFYARPETRKFRVEFLTPTAFKQSGEYVFWPDPRLVFQSLAQKYGAIVDGEEPDPGLIAEFGQSVRLSAFRVASAPFAVGAARVPGFTGSATFTVRGVDTFASYIAALLWFGEFSGCGIKASMGMGAIRVQPLAPREKCVPKP</sequence>
<proteinExistence type="inferred from homology"/>
<feature type="chain" id="PRO_0000426943" description="CRISPR-associated endoribonuclease Cas6">
    <location>
        <begin position="1"/>
        <end position="314"/>
    </location>
</feature>
<feature type="region of interest" description="Disordered" evidence="2">
    <location>
        <begin position="1"/>
        <end position="29"/>
    </location>
</feature>
<keyword id="KW-0051">Antiviral defense</keyword>
<keyword id="KW-0255">Endonuclease</keyword>
<keyword id="KW-0378">Hydrolase</keyword>
<keyword id="KW-0540">Nuclease</keyword>
<keyword id="KW-1185">Reference proteome</keyword>
<keyword id="KW-0694">RNA-binding</keyword>
<dbReference type="EC" id="3.1.-.-"/>
<dbReference type="EMBL" id="AE000516">
    <property type="protein sequence ID" value="AAK47216.1"/>
    <property type="molecule type" value="Genomic_DNA"/>
</dbReference>
<dbReference type="PIR" id="C70692">
    <property type="entry name" value="C70692"/>
</dbReference>
<dbReference type="SMR" id="P9WPJ0"/>
<dbReference type="KEGG" id="mtc:MT2891"/>
<dbReference type="PATRIC" id="fig|83331.31.peg.3120"/>
<dbReference type="HOGENOM" id="CLU_063836_2_0_11"/>
<dbReference type="Proteomes" id="UP000001020">
    <property type="component" value="Chromosome"/>
</dbReference>
<dbReference type="GO" id="GO:0004519">
    <property type="term" value="F:endonuclease activity"/>
    <property type="evidence" value="ECO:0007669"/>
    <property type="project" value="UniProtKB-KW"/>
</dbReference>
<dbReference type="GO" id="GO:0003723">
    <property type="term" value="F:RNA binding"/>
    <property type="evidence" value="ECO:0007669"/>
    <property type="project" value="UniProtKB-KW"/>
</dbReference>
<dbReference type="GO" id="GO:0051607">
    <property type="term" value="P:defense response to virus"/>
    <property type="evidence" value="ECO:0007669"/>
    <property type="project" value="UniProtKB-KW"/>
</dbReference>
<dbReference type="CDD" id="cd21141">
    <property type="entry name" value="Cas6_III-like"/>
    <property type="match status" value="1"/>
</dbReference>
<dbReference type="Gene3D" id="3.30.70.1900">
    <property type="match status" value="1"/>
</dbReference>
<dbReference type="InterPro" id="IPR019267">
    <property type="entry name" value="CRISPR-assoc_Cas6_C"/>
</dbReference>
<dbReference type="InterPro" id="IPR010156">
    <property type="entry name" value="CRISPR-assoc_prot_Cas6"/>
</dbReference>
<dbReference type="NCBIfam" id="TIGR01877">
    <property type="entry name" value="cas_cas6"/>
    <property type="match status" value="1"/>
</dbReference>
<dbReference type="Pfam" id="PF10040">
    <property type="entry name" value="CRISPR_Cas6"/>
    <property type="match status" value="1"/>
</dbReference>
<name>CAS6_MYCTO</name>
<protein>
    <recommendedName>
        <fullName>CRISPR-associated endoribonuclease Cas6</fullName>
        <ecNumber>3.1.-.-</ecNumber>
    </recommendedName>
</protein>
<gene>
    <name type="primary">cas6</name>
    <name type="ordered locus">MT2891</name>
</gene>